<accession>P0AE02</accession>
<accession>P76993</accession>
<accession>P77438</accession>
<organism>
    <name type="scientific">Escherichia coli O6:H1 (strain CFT073 / ATCC 700928 / UPEC)</name>
    <dbReference type="NCBI Taxonomy" id="199310"/>
    <lineage>
        <taxon>Bacteria</taxon>
        <taxon>Pseudomonadati</taxon>
        <taxon>Pseudomonadota</taxon>
        <taxon>Gammaproteobacteria</taxon>
        <taxon>Enterobacterales</taxon>
        <taxon>Enterobacteriaceae</taxon>
        <taxon>Escherichia</taxon>
    </lineage>
</organism>
<protein>
    <recommendedName>
        <fullName evidence="1">tRNA (cytidine/uridine-2'-O-)-methyltransferase TrmJ</fullName>
        <ecNumber evidence="1">2.1.1.200</ecNumber>
    </recommendedName>
    <alternativeName>
        <fullName evidence="1">tRNA (cytidine(32)/uridine(32)-2'-O)-methyltransferase</fullName>
    </alternativeName>
    <alternativeName>
        <fullName evidence="1">tRNA Cm32/Um32 methyltransferase</fullName>
    </alternativeName>
</protein>
<evidence type="ECO:0000250" key="1">
    <source>
        <dbReference type="UniProtKB" id="P0AE01"/>
    </source>
</evidence>
<evidence type="ECO:0000305" key="2"/>
<comment type="function">
    <text evidence="1">Catalyzes the formation of 2'O-methylated cytidine (Cm32) or 2'O-methylated uridine (Um32) at position 32 in tRNA.</text>
</comment>
<comment type="catalytic activity">
    <reaction evidence="1">
        <text>cytidine(32) in tRNA + S-adenosyl-L-methionine = 2'-O-methylcytidine(32) in tRNA + S-adenosyl-L-homocysteine + H(+)</text>
        <dbReference type="Rhea" id="RHEA:42932"/>
        <dbReference type="Rhea" id="RHEA-COMP:10288"/>
        <dbReference type="Rhea" id="RHEA-COMP:10289"/>
        <dbReference type="ChEBI" id="CHEBI:15378"/>
        <dbReference type="ChEBI" id="CHEBI:57856"/>
        <dbReference type="ChEBI" id="CHEBI:59789"/>
        <dbReference type="ChEBI" id="CHEBI:74495"/>
        <dbReference type="ChEBI" id="CHEBI:82748"/>
        <dbReference type="EC" id="2.1.1.200"/>
    </reaction>
</comment>
<comment type="catalytic activity">
    <reaction evidence="1">
        <text>uridine(32) in tRNA + S-adenosyl-L-methionine = 2'-O-methyluridine(32) in tRNA + S-adenosyl-L-homocysteine + H(+)</text>
        <dbReference type="Rhea" id="RHEA:42936"/>
        <dbReference type="Rhea" id="RHEA-COMP:10107"/>
        <dbReference type="Rhea" id="RHEA-COMP:10290"/>
        <dbReference type="ChEBI" id="CHEBI:15378"/>
        <dbReference type="ChEBI" id="CHEBI:57856"/>
        <dbReference type="ChEBI" id="CHEBI:59789"/>
        <dbReference type="ChEBI" id="CHEBI:65315"/>
        <dbReference type="ChEBI" id="CHEBI:74478"/>
        <dbReference type="EC" id="2.1.1.200"/>
    </reaction>
</comment>
<comment type="subunit">
    <text evidence="1">Homodimer.</text>
</comment>
<comment type="subcellular location">
    <subcellularLocation>
        <location evidence="1">Cytoplasm</location>
    </subcellularLocation>
</comment>
<comment type="similarity">
    <text evidence="2">Belongs to the class IV-like SAM-binding methyltransferase superfamily. RNA methyltransferase TrmH family.</text>
</comment>
<gene>
    <name type="primary">trmJ</name>
    <name type="ordered locus">c3058</name>
</gene>
<sequence>MLQNIRIVLVETSHTGNMGSVARAMKTMGLTNLWLVNPLVKPDSQAIALAAGASDVIGNAHIVDTLDEALAGCSLVVGTSARSRTLPWPMLDPRECGLKSVAEAANTPVALVFGRERVGLTNEELQKCHYHVAIAANPEYSSLNLAMAVQVIAYEVRMAWLATQENGEQVEHEETPYPLVDDLERFYGHLEQTLLATGFIRENHPGQVMNKLRRLFTRARPESQELNILRGILASIEQQNKGNKAE</sequence>
<feature type="chain" id="PRO_0000159826" description="tRNA (cytidine/uridine-2'-O-)-methyltransferase TrmJ">
    <location>
        <begin position="1"/>
        <end position="246"/>
    </location>
</feature>
<feature type="binding site" evidence="1">
    <location>
        <begin position="79"/>
        <end position="81"/>
    </location>
    <ligand>
        <name>S-adenosyl-L-methionine</name>
        <dbReference type="ChEBI" id="CHEBI:59789"/>
    </ligand>
</feature>
<feature type="binding site" evidence="1">
    <location>
        <position position="114"/>
    </location>
    <ligand>
        <name>S-adenosyl-L-methionine</name>
        <dbReference type="ChEBI" id="CHEBI:59789"/>
    </ligand>
</feature>
<feature type="binding site" evidence="1">
    <location>
        <position position="134"/>
    </location>
    <ligand>
        <name>S-adenosyl-L-methionine</name>
        <dbReference type="ChEBI" id="CHEBI:59789"/>
    </ligand>
</feature>
<feature type="binding site" evidence="1">
    <location>
        <begin position="141"/>
        <end position="143"/>
    </location>
    <ligand>
        <name>S-adenosyl-L-methionine</name>
        <dbReference type="ChEBI" id="CHEBI:59789"/>
    </ligand>
</feature>
<proteinExistence type="inferred from homology"/>
<keyword id="KW-0963">Cytoplasm</keyword>
<keyword id="KW-0489">Methyltransferase</keyword>
<keyword id="KW-1185">Reference proteome</keyword>
<keyword id="KW-0949">S-adenosyl-L-methionine</keyword>
<keyword id="KW-0808">Transferase</keyword>
<keyword id="KW-0819">tRNA processing</keyword>
<name>TRMJ_ECOL6</name>
<reference key="1">
    <citation type="journal article" date="2002" name="Proc. Natl. Acad. Sci. U.S.A.">
        <title>Extensive mosaic structure revealed by the complete genome sequence of uropathogenic Escherichia coli.</title>
        <authorList>
            <person name="Welch R.A."/>
            <person name="Burland V."/>
            <person name="Plunkett G. III"/>
            <person name="Redford P."/>
            <person name="Roesch P."/>
            <person name="Rasko D."/>
            <person name="Buckles E.L."/>
            <person name="Liou S.-R."/>
            <person name="Boutin A."/>
            <person name="Hackett J."/>
            <person name="Stroud D."/>
            <person name="Mayhew G.F."/>
            <person name="Rose D.J."/>
            <person name="Zhou S."/>
            <person name="Schwartz D.C."/>
            <person name="Perna N.T."/>
            <person name="Mobley H.L.T."/>
            <person name="Donnenberg M.S."/>
            <person name="Blattner F.R."/>
        </authorList>
    </citation>
    <scope>NUCLEOTIDE SEQUENCE [LARGE SCALE GENOMIC DNA]</scope>
    <source>
        <strain>CFT073 / ATCC 700928 / UPEC</strain>
    </source>
</reference>
<dbReference type="EC" id="2.1.1.200" evidence="1"/>
<dbReference type="EMBL" id="AE014075">
    <property type="protein sequence ID" value="AAN81508.1"/>
    <property type="molecule type" value="Genomic_DNA"/>
</dbReference>
<dbReference type="RefSeq" id="WP_000940019.1">
    <property type="nucleotide sequence ID" value="NZ_CP051263.1"/>
</dbReference>
<dbReference type="SMR" id="P0AE02"/>
<dbReference type="STRING" id="199310.c3058"/>
<dbReference type="GeneID" id="86860658"/>
<dbReference type="KEGG" id="ecc:c3058"/>
<dbReference type="eggNOG" id="COG0565">
    <property type="taxonomic scope" value="Bacteria"/>
</dbReference>
<dbReference type="HOGENOM" id="CLU_056931_0_1_6"/>
<dbReference type="BioCyc" id="ECOL199310:C3058-MONOMER"/>
<dbReference type="Proteomes" id="UP000001410">
    <property type="component" value="Chromosome"/>
</dbReference>
<dbReference type="GO" id="GO:0005829">
    <property type="term" value="C:cytosol"/>
    <property type="evidence" value="ECO:0007669"/>
    <property type="project" value="TreeGrafter"/>
</dbReference>
<dbReference type="GO" id="GO:0003723">
    <property type="term" value="F:RNA binding"/>
    <property type="evidence" value="ECO:0007669"/>
    <property type="project" value="InterPro"/>
</dbReference>
<dbReference type="GO" id="GO:0160206">
    <property type="term" value="F:tRNA (cytidine(32)/uridine(32)-2'-O)-methyltransferase activity"/>
    <property type="evidence" value="ECO:0007669"/>
    <property type="project" value="UniProtKB-EC"/>
</dbReference>
<dbReference type="GO" id="GO:0002128">
    <property type="term" value="P:tRNA nucleoside ribose methylation"/>
    <property type="evidence" value="ECO:0007669"/>
    <property type="project" value="TreeGrafter"/>
</dbReference>
<dbReference type="CDD" id="cd18093">
    <property type="entry name" value="SpoU-like_TrmJ"/>
    <property type="match status" value="1"/>
</dbReference>
<dbReference type="FunFam" id="1.10.8.590:FF:000001">
    <property type="entry name" value="tRNA:Cm32/Um32 methyltransferase"/>
    <property type="match status" value="1"/>
</dbReference>
<dbReference type="FunFam" id="3.40.1280.10:FF:000006">
    <property type="entry name" value="Uncharacterized tRNA/rRNA methyltransferase HI_0380"/>
    <property type="match status" value="1"/>
</dbReference>
<dbReference type="Gene3D" id="1.10.8.590">
    <property type="match status" value="1"/>
</dbReference>
<dbReference type="Gene3D" id="3.40.1280.10">
    <property type="match status" value="1"/>
</dbReference>
<dbReference type="InterPro" id="IPR029028">
    <property type="entry name" value="Alpha/beta_knot_MTases"/>
</dbReference>
<dbReference type="InterPro" id="IPR004384">
    <property type="entry name" value="RNA_MeTrfase_TrmJ/LasT"/>
</dbReference>
<dbReference type="InterPro" id="IPR001537">
    <property type="entry name" value="SpoU_MeTrfase"/>
</dbReference>
<dbReference type="InterPro" id="IPR029026">
    <property type="entry name" value="tRNA_m1G_MTases_N"/>
</dbReference>
<dbReference type="NCBIfam" id="NF011694">
    <property type="entry name" value="PRK15114.1"/>
    <property type="match status" value="1"/>
</dbReference>
<dbReference type="NCBIfam" id="TIGR00050">
    <property type="entry name" value="rRNA_methyl_1"/>
    <property type="match status" value="1"/>
</dbReference>
<dbReference type="PANTHER" id="PTHR42786:SF2">
    <property type="entry name" value="TRNA (CYTIDINE_URIDINE-2'-O-)-METHYLTRANSFERASE TRMJ"/>
    <property type="match status" value="1"/>
</dbReference>
<dbReference type="PANTHER" id="PTHR42786">
    <property type="entry name" value="TRNA/RRNA METHYLTRANSFERASE"/>
    <property type="match status" value="1"/>
</dbReference>
<dbReference type="Pfam" id="PF00588">
    <property type="entry name" value="SpoU_methylase"/>
    <property type="match status" value="1"/>
</dbReference>
<dbReference type="PIRSF" id="PIRSF004808">
    <property type="entry name" value="LasT"/>
    <property type="match status" value="1"/>
</dbReference>
<dbReference type="SUPFAM" id="SSF75217">
    <property type="entry name" value="alpha/beta knot"/>
    <property type="match status" value="1"/>
</dbReference>